<name>FRBB_DOTX1</name>
<organism>
    <name type="scientific">Dothideomycetidae sp. (strain 11243)</name>
    <name type="common">Fungal sp. (strain No.11243)</name>
    <dbReference type="NCBI Taxonomy" id="1603295"/>
    <lineage>
        <taxon>Eukaryota</taxon>
        <taxon>Fungi</taxon>
        <taxon>Dikarya</taxon>
        <taxon>Ascomycota</taxon>
        <taxon>Pezizomycotina</taxon>
        <taxon>Dothideomycetes</taxon>
        <taxon>Dothideomycetidae</taxon>
    </lineage>
</organism>
<reference key="1">
    <citation type="journal article" date="2015" name="Genome Announc.">
        <title>Genome sequence of fungal species No.11243, which produces the antifungal antibiotic FR901469.</title>
        <authorList>
            <person name="Matsui M."/>
            <person name="Yokoyama T."/>
            <person name="Nemoto K."/>
            <person name="Kumagai T."/>
            <person name="Terai G."/>
            <person name="Arita M."/>
            <person name="Machida M."/>
            <person name="Shibata T."/>
        </authorList>
    </citation>
    <scope>NUCLEOTIDE SEQUENCE [LARGE SCALE GENOMIC DNA]</scope>
</reference>
<reference key="2">
    <citation type="journal article" date="2000" name="J. Antibiot.">
        <title>FR901469, a novel antifungal antibiotic from an unidentified fungus No.11243. I. Taxonomy, fermentation, isolation, physico-chemical properties and biological properties.</title>
        <authorList>
            <person name="Fujie A."/>
            <person name="Iwamoto T."/>
            <person name="Muramatsu H."/>
            <person name="Okudaira T."/>
            <person name="Nitta K."/>
            <person name="Nakanishi T."/>
            <person name="Sakamoto K."/>
            <person name="Hori Y."/>
            <person name="Hino M."/>
            <person name="Hashimoto S."/>
            <person name="Okuhara M."/>
        </authorList>
    </citation>
    <scope>BIOTECHNOLOGY</scope>
</reference>
<reference key="3">
    <citation type="journal article" date="2000" name="J. Antibiot.">
        <title>FR901469, a novel antifungal antibiotic from an unidentified fungus No.11243. II. In vitro and in vivo activities.</title>
        <authorList>
            <person name="Fujie A."/>
            <person name="Iwamoto T."/>
            <person name="Muramatsu H."/>
            <person name="Okudaira T."/>
            <person name="Sato I."/>
            <person name="Furuta T."/>
            <person name="Tsurumi Y."/>
            <person name="Hori Y."/>
            <person name="Hino M."/>
            <person name="Hashimoto S."/>
            <person name="Okuhara M."/>
        </authorList>
    </citation>
    <scope>BIOTECHNOLOGY</scope>
</reference>
<reference key="4">
    <citation type="journal article" date="2017" name="J. Biosci. Bioeng.">
        <title>Identification of a putative FR901469 biosynthesis gene cluster in fungal sp. No. 11243 and enhancement of the productivity by overexpressing the transcription factor gene frbF.</title>
        <authorList>
            <person name="Matsui M."/>
            <person name="Yokoyama T."/>
            <person name="Nemoto K."/>
            <person name="Kumagai T."/>
            <person name="Terai G."/>
            <person name="Tamano K."/>
            <person name="Machida M."/>
            <person name="Shibata T."/>
        </authorList>
    </citation>
    <scope>FUNCTION</scope>
    <scope>INDUCTION</scope>
    <scope>PATHWAY</scope>
</reference>
<evidence type="ECO:0000255" key="1"/>
<evidence type="ECO:0000255" key="2">
    <source>
        <dbReference type="PROSITE-ProRule" id="PRU00258"/>
    </source>
</evidence>
<evidence type="ECO:0000255" key="3">
    <source>
        <dbReference type="PROSITE-ProRule" id="PRU01348"/>
    </source>
</evidence>
<evidence type="ECO:0000255" key="4">
    <source>
        <dbReference type="PROSITE-ProRule" id="PRU01363"/>
    </source>
</evidence>
<evidence type="ECO:0000256" key="5">
    <source>
        <dbReference type="SAM" id="MobiDB-lite"/>
    </source>
</evidence>
<evidence type="ECO:0000269" key="6">
    <source>
    </source>
</evidence>
<evidence type="ECO:0000269" key="7">
    <source>
    </source>
</evidence>
<evidence type="ECO:0000269" key="8">
    <source>
    </source>
</evidence>
<evidence type="ECO:0000303" key="9">
    <source>
    </source>
</evidence>
<evidence type="ECO:0000305" key="10">
    <source>
    </source>
</evidence>
<sequence>MRNIDEHMSERATLQSSGGYGERDSGVEPIAIIGMSCRLPGEASDPKGLWELLASGKSAWSKVPKDRFNMDAFHDPSNPTAGTTNTAGGHFIEEDLAAFDADFFGMNPVELEALDPQQRLLMEIAYESFENAGLPMKQLWGSNTGVYVGQWSNDYDQNLARDTEFPALYHTIGAGPAISSNRLSYFFNLRGPSFTVDTGCSASLVALHSAVQSLRAGETDASFVGGVNLLLDPQRFSYQSKLKMFSAQGRSYSFDHRANGYGRGEGCCGLVLKRLSAAKRDGDPIRAVIRNSVLNQDGRTPGISVPSGLAQEQAIKAAYSGARLHDGPDFVEAHGTGTAVGDPIEVKAIAAAFATIKTRDGQPIPVGSVKGNVGHTESCAGLAGVIKAVLMLENQTIPPQANFERLNPSLLLDEWNLYVPTVLEQRELRRISVNSFGYGGTNAHVILDRADAPTDQKRDSIFLGLDSAPQPKRKRLLILSATSEEGCSKVAQSLVDYVDQRFDSAATEAWLDRLAYTVNRKSIHSHRTTILASDLEEMLHQLSRVVQVPTPARVDVKSPKVAYVFSGQGAQYYNMGRELINTWPVFTKSLQRANQQLNTLGCEWDLMAELSRDAESSNLDNPAFGQPASTAIQLALCDTLADLGVVPVSVAGHSSGEIAAAYAAHALSFENAMTVSYHRGRLTAALVSKQTSPAGAMLAVGTSPDVAQEYIDSIDGPSSRVTIACYNSPSSVTLSGDIEGIEKLQQMFENKKIFNRLLRTNGAAYHSHHMQQIEEEYRNALEGVEATTAKIPLISSVTGRDSGSEVFGRDYWVENLVSPVRFDEATAQLCQDISLILELGAHETLGGPIRQTLKTLGPDARDVRYLSCLKRKSDAASTLLTTIGEVFADGIHVDLHTANNGFDKKLPRPLSDLPRYPFDHSRRYWHESRVSKEYKHRKFLPHELLGNMSTDVNHLEPKWRRYLKLKEIPWLRNHVVQGQIVFPAAGYLSMALEAVRRYTLSADPEAKISSYAYRNISFGKALVLSDEKLDNEITLSLIPESRTAKESWHDWVEFRIHTVSAGKPWTEHCRGRIRAVLDDSNEDHIEATADKRVVEQALSQSVRFVSPSAFYNLSRQNGLDWHKPFDNLVKIRASRETSVTVTESPRLERDDSLHNDSPYVIHPGTLDTALFHCVCAIVYSQKKIDVPVVPSFISELVIAGNARHAPGTRLVSHAIEVDNGEAHDVVINSAVDGHDQFLIRARGMILAKLPGGTSRSGSRKLTHESTWVPYCQKLTTQHLDRICKKDLPDGSAVEQNDMLNSLTVAFCRAAIEKVSYEQVREGYQQHFYRWMKKIVDGSMLESTPEPFMNGHLTNGLTNGITSNGTKHIPNGLSNGISKHQVNGIANGLPQDASNHIAQKHPDASSLTPKENALKVLTNGLSKDLPNGVSGKHDEFEILKSSSASPGEAAVRRVGENAASILTGEIDPISLLLHDGLLPKMYAEFRNQRCYHQIKAYIAELGLQNPSLRIIEIGGGSASASLPILQACNRDGQSSIAKYDFTDISSGFFLDARKTLADYSEIVDFHVLDIEQDASQQGIEKGSYDIVIACNVIHATVDIDVSLANAKGLLRPNGRLILMEITNPQPYYSLIFGAFPGWWAGAESGRVESPLLRGEQWSEKLIKHGFVDTEPVFRDFEEKQGGTLGVFATTMAEDVSERKPIAHINIVGLPTAPNAWSATDLARVLGKSSEISYIDLNDKSALLAPLRDAVIFLPEICDALTKSITEESFEALQRQIIGSNIVLMLGRGGAIDPSLPNGSLTTGFARTIRLEHPKVRFITLDLDPQSPYESSLTVVNEVLRSPVTDLSKPSADLECEFAERNGQLFVSRVVAEEKAEHYIKNATGKSILHDRNFLSPRNAMRAGLGIVGLLETFHWKPDPGMDGPLGPDQVRVELRAASINFRDILVATGQVQSLTEMKNDCSGVVVESGENMKSRFKPGDRVCAYYGQSYSNFPVVDGDCCSRIPDSMSFEVAASVPIVWGTVYHSLVDIAHLAEGEKILIHSGAGAVGQAAIALAQHLGAEVFTTAGSDQKRAMLAEKFNLPNDHIFSSRNTHFKQGIKELTKGQGVDVILNSLTGEMTRASCEVLTDFGRFIEIGKKDLIDDALLPTKFLLRNITFACVDLTQIIEKRHKQARRLLEKVVDLLASDAVKATEITTYPISEIEHAFRFVASGKHIGKVILTVAQDEVVKVSSASEYLTKSYTDLVQAASAPPQLAQLQTDAVYIVVGGLGGLGRCVVPWLADRGARTIVTLSRSGASSEQATTLIEEMQSRGVSVVAKACDIGSKESLRGVVEDIKGSLSLPIRGLINSAMSLQDVTFKDMTHEQWQKSLLPKVQGTWNLHECLPKDLDFFISMSSIVAISGNLGQSNYGAACSFQDSFAAFRRAQGLSGYSINIGPVSDAGFVSENEQVNMGMERKGFSSVTIAEVLANLDYVVTSAGNRTQNSIGLLPARPDASRSTWLQNKRLIHLAQHSGPRGEGEGGKSDEAQDALEAVGNATTAEGAEAAVLTAILQQLSKLLMTPVEQLSPRRTLDSYGVDSLIAVELKNWIGTYLEADIPLLVLRETNDIQHLARLAAEESRLVSLA</sequence>
<accession>A0A0S6XH49</accession>
<protein>
    <recommendedName>
        <fullName evidence="9">Highly reducing polyketide synthase frbB</fullName>
        <shortName evidence="9">HR-PKS frbB</shortName>
        <ecNumber evidence="10">2.3.1.-</ecNumber>
    </recommendedName>
    <alternativeName>
        <fullName evidence="9">FR901469 biosynthesis cluster protein B</fullName>
    </alternativeName>
</protein>
<gene>
    <name evidence="9" type="primary">frbB</name>
    <name type="ORF">ANO11243_029860</name>
</gene>
<comment type="function">
    <text evidence="8 10">Highly reducing polyketide synthase; part of the gene cluster that mediates the biosynthesis of the antifungal antibiotic FR901469, an inhibitor of beta-1,3-glucansynthase, exerting antifungal activity against the pathogenes Candida albicans and Aspergillus fumigatus (PubMed:27660098). FR901469 is a cyclic depsipeptide containing 12 amino acid residues and a fatty acid chain (PubMed:27660098). The NRPS frbI contains 12 modules responsible for the formation of the depsipeptide backbone which is denoted as Acyl-Thr-Ala-Tyr-Val-4OHPro-Thr-Thr-3OHPro-threo3OHGln-Gly-Thr-Orn-OH (C71H116N14O23) (Probable). The PKS frbB is probably involved in the production of the hydrocarbon chain, and the acyl-CoA ligase frbC might be involved in the transport of the chain to the peptide ptoduct of frbI (Probable). Because FR901469 contains 3 hydroxylated amino acid residues, the 3 oxygenases frbA, frbH, and frbJ might be participating in amino acid hydroxylation (Probable). As no thioesterase domains were detected in frbI or frbB, the thioesterases frbD and frbE may instead release and cyclize the products of the NRPS and PKS, respectively (Probable).</text>
</comment>
<comment type="pathway">
    <text evidence="10">Antifungal biosynthesis.</text>
</comment>
<comment type="induction">
    <text evidence="8">Expression is positively regulated by the cluster-specific transcription factor frbF.</text>
</comment>
<comment type="domain">
    <text evidence="10">Multidomain protein; including a ketosynthase (KS) that catalyzes repeated decarboxylative condensation to elongate the polyketide backbone; a malonyl-CoA:ACP transacylase (MAT) that selects and transfers the extender unit malonyl-CoA; a dehydratase (DH) domain that reduces hydroxyl groups to enoyl groups; a methyltransferase (CMeT) domain responsible for the incorporation of methyl groups; an enoylreductase (ER) domain that reduces enoyl groups to alkyl group; a ketoreductase (KR) domain that catalyzes beta-ketoreduction steps; and an acyl-carrier protein (ACP) that serves as the tether of the growing and completed polyketide via its phosphopantetheinyl arm.</text>
</comment>
<comment type="biotechnology">
    <text evidence="6 7">FR901469 inhibits the activity of 1,3-beta-glucan synthase from Candida albicans and Aspergillus fumigatus (PubMed:11099224, PubMed:11099225). With minimal inhibitory concentrations (MICs) against Candida albicans and Aspergillus fumigatus of 0.63 ug/ml and 0.16 ug/ml, repectively, FR901469 displays greater inhibitory activity than other 1,3-beta-glucan synthase inhibitors such as, WF11899A, echinocandin B, aculeacin A, and papulacandin B (PubMed:11099224, PubMed:11099225).</text>
</comment>
<keyword id="KW-0012">Acyltransferase</keyword>
<keyword id="KW-0489">Methyltransferase</keyword>
<keyword id="KW-0511">Multifunctional enzyme</keyword>
<keyword id="KW-0521">NADP</keyword>
<keyword id="KW-0560">Oxidoreductase</keyword>
<keyword id="KW-0596">Phosphopantetheine</keyword>
<keyword id="KW-0597">Phosphoprotein</keyword>
<keyword id="KW-1185">Reference proteome</keyword>
<keyword id="KW-0949">S-adenosyl-L-methionine</keyword>
<keyword id="KW-0808">Transferase</keyword>
<proteinExistence type="evidence at protein level"/>
<feature type="chain" id="PRO_0000454571" description="Highly reducing polyketide synthase frbB">
    <location>
        <begin position="1"/>
        <end position="2625"/>
    </location>
</feature>
<feature type="domain" description="Ketosynthase family 3 (KS3)" evidence="3">
    <location>
        <begin position="27"/>
        <end position="449"/>
    </location>
</feature>
<feature type="domain" description="PKS/mFAS DH" evidence="4">
    <location>
        <begin position="942"/>
        <end position="1255"/>
    </location>
</feature>
<feature type="domain" description="Carrier" evidence="2">
    <location>
        <begin position="2542"/>
        <end position="2619"/>
    </location>
</feature>
<feature type="region of interest" description="Disordered" evidence="5">
    <location>
        <begin position="1"/>
        <end position="25"/>
    </location>
</feature>
<feature type="region of interest" description="Malonyl-CoA:ACP transacylase (MAT) domain" evidence="1">
    <location>
        <begin position="563"/>
        <end position="883"/>
    </location>
</feature>
<feature type="region of interest" description="Dehydratase (DH) domain" evidence="1">
    <location>
        <begin position="942"/>
        <end position="1252"/>
    </location>
</feature>
<feature type="region of interest" description="N-terminal hotdog fold" evidence="4">
    <location>
        <begin position="942"/>
        <end position="1080"/>
    </location>
</feature>
<feature type="region of interest" description="C-terminal hotdog fold" evidence="4">
    <location>
        <begin position="1102"/>
        <end position="1255"/>
    </location>
</feature>
<feature type="region of interest" description="Methyltransferase (CMet) domain" evidence="1">
    <location>
        <begin position="1490"/>
        <end position="1673"/>
    </location>
</feature>
<feature type="region of interest" description="Enoyl reductase (ER) domain" evidence="1">
    <location>
        <begin position="1907"/>
        <end position="2220"/>
    </location>
</feature>
<feature type="region of interest" description="Ketoreductase (KR) domain" evidence="1">
    <location>
        <begin position="2261"/>
        <end position="2439"/>
    </location>
</feature>
<feature type="compositionally biased region" description="Basic and acidic residues" evidence="5">
    <location>
        <begin position="1"/>
        <end position="10"/>
    </location>
</feature>
<feature type="active site" description="For beta-ketoacyl synthase activity" evidence="3">
    <location>
        <position position="200"/>
    </location>
</feature>
<feature type="active site" description="For beta-ketoacyl synthase activity" evidence="3">
    <location>
        <position position="334"/>
    </location>
</feature>
<feature type="active site" description="For beta-ketoacyl synthase activity" evidence="3">
    <location>
        <position position="375"/>
    </location>
</feature>
<feature type="active site" description="Proton acceptor; for dehydratase activity" evidence="4">
    <location>
        <position position="974"/>
    </location>
</feature>
<feature type="active site" description="Proton donor; for dehydratase activity" evidence="4">
    <location>
        <position position="1167"/>
    </location>
</feature>
<feature type="modified residue" description="O-(pantetheine 4'-phosphoryl)serine" evidence="2">
    <location>
        <position position="2579"/>
    </location>
</feature>
<dbReference type="EC" id="2.3.1.-" evidence="10"/>
<dbReference type="EMBL" id="DF938583">
    <property type="protein sequence ID" value="GAM84983.1"/>
    <property type="molecule type" value="Genomic_DNA"/>
</dbReference>
<dbReference type="SMR" id="A0A0S6XH49"/>
<dbReference type="STRING" id="1603295.A0A0S6XH49"/>
<dbReference type="OrthoDB" id="329835at2759"/>
<dbReference type="Proteomes" id="UP000054361">
    <property type="component" value="Unassembled WGS sequence"/>
</dbReference>
<dbReference type="GO" id="GO:0004315">
    <property type="term" value="F:3-oxoacyl-[acyl-carrier-protein] synthase activity"/>
    <property type="evidence" value="ECO:0007669"/>
    <property type="project" value="InterPro"/>
</dbReference>
<dbReference type="GO" id="GO:0004312">
    <property type="term" value="F:fatty acid synthase activity"/>
    <property type="evidence" value="ECO:0007669"/>
    <property type="project" value="TreeGrafter"/>
</dbReference>
<dbReference type="GO" id="GO:0008168">
    <property type="term" value="F:methyltransferase activity"/>
    <property type="evidence" value="ECO:0007669"/>
    <property type="project" value="UniProtKB-KW"/>
</dbReference>
<dbReference type="GO" id="GO:0016491">
    <property type="term" value="F:oxidoreductase activity"/>
    <property type="evidence" value="ECO:0007669"/>
    <property type="project" value="UniProtKB-KW"/>
</dbReference>
<dbReference type="GO" id="GO:0031177">
    <property type="term" value="F:phosphopantetheine binding"/>
    <property type="evidence" value="ECO:0007669"/>
    <property type="project" value="InterPro"/>
</dbReference>
<dbReference type="GO" id="GO:0006633">
    <property type="term" value="P:fatty acid biosynthetic process"/>
    <property type="evidence" value="ECO:0007669"/>
    <property type="project" value="InterPro"/>
</dbReference>
<dbReference type="GO" id="GO:0032259">
    <property type="term" value="P:methylation"/>
    <property type="evidence" value="ECO:0007669"/>
    <property type="project" value="UniProtKB-KW"/>
</dbReference>
<dbReference type="GO" id="GO:0044550">
    <property type="term" value="P:secondary metabolite biosynthetic process"/>
    <property type="evidence" value="ECO:0007669"/>
    <property type="project" value="TreeGrafter"/>
</dbReference>
<dbReference type="CDD" id="cd02440">
    <property type="entry name" value="AdoMet_MTases"/>
    <property type="match status" value="1"/>
</dbReference>
<dbReference type="CDD" id="cd05195">
    <property type="entry name" value="enoyl_red"/>
    <property type="match status" value="1"/>
</dbReference>
<dbReference type="CDD" id="cd00833">
    <property type="entry name" value="PKS"/>
    <property type="match status" value="1"/>
</dbReference>
<dbReference type="FunFam" id="3.40.50.720:FF:000209">
    <property type="entry name" value="Polyketide synthase Pks12"/>
    <property type="match status" value="1"/>
</dbReference>
<dbReference type="Gene3D" id="3.30.70.3290">
    <property type="match status" value="1"/>
</dbReference>
<dbReference type="Gene3D" id="3.40.47.10">
    <property type="match status" value="1"/>
</dbReference>
<dbReference type="Gene3D" id="1.10.1200.10">
    <property type="entry name" value="ACP-like"/>
    <property type="match status" value="1"/>
</dbReference>
<dbReference type="Gene3D" id="3.40.366.10">
    <property type="entry name" value="Malonyl-Coenzyme A Acyl Carrier Protein, domain 2"/>
    <property type="match status" value="1"/>
</dbReference>
<dbReference type="Gene3D" id="3.90.180.10">
    <property type="entry name" value="Medium-chain alcohol dehydrogenases, catalytic domain"/>
    <property type="match status" value="1"/>
</dbReference>
<dbReference type="Gene3D" id="3.40.50.720">
    <property type="entry name" value="NAD(P)-binding Rossmann-like Domain"/>
    <property type="match status" value="2"/>
</dbReference>
<dbReference type="Gene3D" id="3.10.129.110">
    <property type="entry name" value="Polyketide synthase dehydratase"/>
    <property type="match status" value="1"/>
</dbReference>
<dbReference type="Gene3D" id="3.40.50.150">
    <property type="entry name" value="Vaccinia Virus protein VP39"/>
    <property type="match status" value="1"/>
</dbReference>
<dbReference type="InterPro" id="IPR001227">
    <property type="entry name" value="Ac_transferase_dom_sf"/>
</dbReference>
<dbReference type="InterPro" id="IPR036736">
    <property type="entry name" value="ACP-like_sf"/>
</dbReference>
<dbReference type="InterPro" id="IPR014043">
    <property type="entry name" value="Acyl_transferase_dom"/>
</dbReference>
<dbReference type="InterPro" id="IPR016035">
    <property type="entry name" value="Acyl_Trfase/lysoPLipase"/>
</dbReference>
<dbReference type="InterPro" id="IPR013154">
    <property type="entry name" value="ADH-like_N"/>
</dbReference>
<dbReference type="InterPro" id="IPR011032">
    <property type="entry name" value="GroES-like_sf"/>
</dbReference>
<dbReference type="InterPro" id="IPR018201">
    <property type="entry name" value="Ketoacyl_synth_AS"/>
</dbReference>
<dbReference type="InterPro" id="IPR014031">
    <property type="entry name" value="Ketoacyl_synth_C"/>
</dbReference>
<dbReference type="InterPro" id="IPR014030">
    <property type="entry name" value="Ketoacyl_synth_N"/>
</dbReference>
<dbReference type="InterPro" id="IPR016036">
    <property type="entry name" value="Malonyl_transacylase_ACP-bd"/>
</dbReference>
<dbReference type="InterPro" id="IPR013217">
    <property type="entry name" value="Methyltransf_12"/>
</dbReference>
<dbReference type="InterPro" id="IPR036291">
    <property type="entry name" value="NAD(P)-bd_dom_sf"/>
</dbReference>
<dbReference type="InterPro" id="IPR056501">
    <property type="entry name" value="NAD-bd_HRPKS_sdrA"/>
</dbReference>
<dbReference type="InterPro" id="IPR032821">
    <property type="entry name" value="PKS_assoc"/>
</dbReference>
<dbReference type="InterPro" id="IPR020841">
    <property type="entry name" value="PKS_Beta-ketoAc_synthase_dom"/>
</dbReference>
<dbReference type="InterPro" id="IPR042104">
    <property type="entry name" value="PKS_dehydratase_sf"/>
</dbReference>
<dbReference type="InterPro" id="IPR020807">
    <property type="entry name" value="PKS_DH"/>
</dbReference>
<dbReference type="InterPro" id="IPR049551">
    <property type="entry name" value="PKS_DH_C"/>
</dbReference>
<dbReference type="InterPro" id="IPR049552">
    <property type="entry name" value="PKS_DH_N"/>
</dbReference>
<dbReference type="InterPro" id="IPR020843">
    <property type="entry name" value="PKS_ER"/>
</dbReference>
<dbReference type="InterPro" id="IPR013968">
    <property type="entry name" value="PKS_KR"/>
</dbReference>
<dbReference type="InterPro" id="IPR049900">
    <property type="entry name" value="PKS_mFAS_DH"/>
</dbReference>
<dbReference type="InterPro" id="IPR050091">
    <property type="entry name" value="PKS_NRPS_Biosynth_Enz"/>
</dbReference>
<dbReference type="InterPro" id="IPR020806">
    <property type="entry name" value="PKS_PP-bd"/>
</dbReference>
<dbReference type="InterPro" id="IPR009081">
    <property type="entry name" value="PP-bd_ACP"/>
</dbReference>
<dbReference type="InterPro" id="IPR029063">
    <property type="entry name" value="SAM-dependent_MTases_sf"/>
</dbReference>
<dbReference type="InterPro" id="IPR016039">
    <property type="entry name" value="Thiolase-like"/>
</dbReference>
<dbReference type="PANTHER" id="PTHR43775:SF29">
    <property type="entry name" value="ASPERFURANONE POLYKETIDE SYNTHASE AFOG-RELATED"/>
    <property type="match status" value="1"/>
</dbReference>
<dbReference type="PANTHER" id="PTHR43775">
    <property type="entry name" value="FATTY ACID SYNTHASE"/>
    <property type="match status" value="1"/>
</dbReference>
<dbReference type="Pfam" id="PF23297">
    <property type="entry name" value="ACP_SdgA_C"/>
    <property type="match status" value="1"/>
</dbReference>
<dbReference type="Pfam" id="PF00698">
    <property type="entry name" value="Acyl_transf_1"/>
    <property type="match status" value="1"/>
</dbReference>
<dbReference type="Pfam" id="PF08240">
    <property type="entry name" value="ADH_N"/>
    <property type="match status" value="1"/>
</dbReference>
<dbReference type="Pfam" id="PF13602">
    <property type="entry name" value="ADH_zinc_N_2"/>
    <property type="match status" value="1"/>
</dbReference>
<dbReference type="Pfam" id="PF16197">
    <property type="entry name" value="KAsynt_C_assoc"/>
    <property type="match status" value="1"/>
</dbReference>
<dbReference type="Pfam" id="PF00109">
    <property type="entry name" value="ketoacyl-synt"/>
    <property type="match status" value="1"/>
</dbReference>
<dbReference type="Pfam" id="PF02801">
    <property type="entry name" value="Ketoacyl-synt_C"/>
    <property type="match status" value="1"/>
</dbReference>
<dbReference type="Pfam" id="PF08659">
    <property type="entry name" value="KR"/>
    <property type="match status" value="1"/>
</dbReference>
<dbReference type="Pfam" id="PF08242">
    <property type="entry name" value="Methyltransf_12"/>
    <property type="match status" value="1"/>
</dbReference>
<dbReference type="Pfam" id="PF23114">
    <property type="entry name" value="NAD-bd_HRPKS_sdrA"/>
    <property type="match status" value="1"/>
</dbReference>
<dbReference type="Pfam" id="PF21089">
    <property type="entry name" value="PKS_DH_N"/>
    <property type="match status" value="1"/>
</dbReference>
<dbReference type="Pfam" id="PF14765">
    <property type="entry name" value="PS-DH"/>
    <property type="match status" value="1"/>
</dbReference>
<dbReference type="SMART" id="SM00827">
    <property type="entry name" value="PKS_AT"/>
    <property type="match status" value="1"/>
</dbReference>
<dbReference type="SMART" id="SM00826">
    <property type="entry name" value="PKS_DH"/>
    <property type="match status" value="1"/>
</dbReference>
<dbReference type="SMART" id="SM00829">
    <property type="entry name" value="PKS_ER"/>
    <property type="match status" value="1"/>
</dbReference>
<dbReference type="SMART" id="SM00822">
    <property type="entry name" value="PKS_KR"/>
    <property type="match status" value="1"/>
</dbReference>
<dbReference type="SMART" id="SM00825">
    <property type="entry name" value="PKS_KS"/>
    <property type="match status" value="1"/>
</dbReference>
<dbReference type="SMART" id="SM00823">
    <property type="entry name" value="PKS_PP"/>
    <property type="match status" value="1"/>
</dbReference>
<dbReference type="SUPFAM" id="SSF47336">
    <property type="entry name" value="ACP-like"/>
    <property type="match status" value="1"/>
</dbReference>
<dbReference type="SUPFAM" id="SSF52151">
    <property type="entry name" value="FabD/lysophospholipase-like"/>
    <property type="match status" value="1"/>
</dbReference>
<dbReference type="SUPFAM" id="SSF50129">
    <property type="entry name" value="GroES-like"/>
    <property type="match status" value="1"/>
</dbReference>
<dbReference type="SUPFAM" id="SSF51735">
    <property type="entry name" value="NAD(P)-binding Rossmann-fold domains"/>
    <property type="match status" value="2"/>
</dbReference>
<dbReference type="SUPFAM" id="SSF55048">
    <property type="entry name" value="Probable ACP-binding domain of malonyl-CoA ACP transacylase"/>
    <property type="match status" value="1"/>
</dbReference>
<dbReference type="SUPFAM" id="SSF53335">
    <property type="entry name" value="S-adenosyl-L-methionine-dependent methyltransferases"/>
    <property type="match status" value="1"/>
</dbReference>
<dbReference type="SUPFAM" id="SSF53901">
    <property type="entry name" value="Thiolase-like"/>
    <property type="match status" value="1"/>
</dbReference>
<dbReference type="PROSITE" id="PS50075">
    <property type="entry name" value="CARRIER"/>
    <property type="match status" value="1"/>
</dbReference>
<dbReference type="PROSITE" id="PS00606">
    <property type="entry name" value="KS3_1"/>
    <property type="match status" value="1"/>
</dbReference>
<dbReference type="PROSITE" id="PS52004">
    <property type="entry name" value="KS3_2"/>
    <property type="match status" value="1"/>
</dbReference>
<dbReference type="PROSITE" id="PS52019">
    <property type="entry name" value="PKS_MFAS_DH"/>
    <property type="match status" value="1"/>
</dbReference>